<sequence>MQFFSLKTRIVLGEGSLSYIKSVAKKHSRVLIFSSKSMRVHGFLNETMNYVEDANAEVEAITGVPAEPSYEYVESIMPKVREFQPDLIVALGGGSVIDVAKAVKVFYDAPELKFEEVAFISRFEKPKPIPKLKTPLIAIPSTSGAGSEVSAASVLKKGDIKYNLVSFEIAPEFAILDPRLPRTMPKEVARNSGLDVLVHGIEAYTTTAATPFSDAMAIKAIKLVYKWLPLSVQGDEKARENVHYAATMAGIAFLNARLGLCHSLSHKAAWIAPHGLLNAIFLPYVMEFNMRSEYARKRYAEIARELGFNTAQELIEVIREFNEMLGVPKLSELVSEEEFLSKLDEMSEKAYHDPLINFNPVEPSIEEIKELYKRAFYD</sequence>
<keyword id="KW-0408">Iron</keyword>
<keyword id="KW-0464">Manganese</keyword>
<keyword id="KW-0479">Metal-binding</keyword>
<keyword id="KW-0520">NAD</keyword>
<keyword id="KW-0560">Oxidoreductase</keyword>
<gene>
    <name evidence="5" type="ORF">TBCH5v1_0547</name>
</gene>
<evidence type="ECO:0000250" key="1">
    <source>
        <dbReference type="UniProtKB" id="P0A9S1"/>
    </source>
</evidence>
<evidence type="ECO:0000269" key="2">
    <source>
    </source>
</evidence>
<evidence type="ECO:0000303" key="3">
    <source>
    </source>
</evidence>
<evidence type="ECO:0000305" key="4"/>
<evidence type="ECO:0000312" key="5">
    <source>
        <dbReference type="EMBL" id="ALM74514.1"/>
    </source>
</evidence>
<reference key="1">
    <citation type="journal article" date="2016" name="Genome Announc.">
        <title>Complete genome sequence of the hyperthermophilic and piezophilic archaeon Thermococcus barophilus Ch5, capable of growth at the expense of hydrogenogenesis from carbon monoxide and formate.</title>
        <authorList>
            <person name="Oger P."/>
            <person name="Sokolova T.G."/>
            <person name="Kozhevnikova D.A."/>
            <person name="Taranov E.A."/>
            <person name="Vannier P."/>
            <person name="Lee H.S."/>
            <person name="Kwon K.K."/>
            <person name="Kang S.G."/>
            <person name="Lee J.H."/>
            <person name="Bonch-Osmolovskaya E.A."/>
            <person name="Lebedinsky A.V."/>
        </authorList>
    </citation>
    <scope>NUCLEOTIDE SEQUENCE [LARGE SCALE GENOMIC DNA]</scope>
    <source>
        <strain>Ch5</strain>
    </source>
</reference>
<reference key="2">
    <citation type="journal article" date="2021" name="Int. J. Biol. Macromol.">
        <title>Characterization of a novel type III alcohol dehydrogenase from Thermococcus barophilus Ch5.</title>
        <authorList>
            <person name="Zhang L."/>
            <person name="Jiang D."/>
            <person name="Li Y."/>
            <person name="Wu L."/>
            <person name="Liu Q."/>
            <person name="Dong K."/>
            <person name="Oger P."/>
        </authorList>
    </citation>
    <scope>FUNCTION</scope>
    <scope>CATALYTIC ACTIVITY</scope>
    <scope>COFACTOR</scope>
    <scope>BIOPHYSICOCHEMICAL PROPERTIES</scope>
    <scope>MUTAGENESIS OF ASP-195; HIS-199; HIS-262; HIS-266 AND HIS-274</scope>
    <source>
        <strain>Ch5</strain>
    </source>
</reference>
<name>ADH_THEBA</name>
<dbReference type="EC" id="1.1.1.1" evidence="2"/>
<dbReference type="EMBL" id="CP013050">
    <property type="protein sequence ID" value="ALM74514.1"/>
    <property type="molecule type" value="Genomic_DNA"/>
</dbReference>
<dbReference type="RefSeq" id="WP_056933392.1">
    <property type="nucleotide sequence ID" value="NZ_CP013050.1"/>
</dbReference>
<dbReference type="SMR" id="A0A0S1X9S7"/>
<dbReference type="STRING" id="55802.TBCH5v1_0547"/>
<dbReference type="GeneID" id="26135831"/>
<dbReference type="PATRIC" id="fig|55802.8.peg.544"/>
<dbReference type="Proteomes" id="UP000066042">
    <property type="component" value="Chromosome"/>
</dbReference>
<dbReference type="GO" id="GO:1990362">
    <property type="term" value="F:butanol dehydrogenase (NAD+) activity"/>
    <property type="evidence" value="ECO:0007669"/>
    <property type="project" value="RHEA"/>
</dbReference>
<dbReference type="GO" id="GO:0120542">
    <property type="term" value="F:ethanol dehydrogenase (NAD+) activity"/>
    <property type="evidence" value="ECO:0007669"/>
    <property type="project" value="RHEA"/>
</dbReference>
<dbReference type="GO" id="GO:0046872">
    <property type="term" value="F:metal ion binding"/>
    <property type="evidence" value="ECO:0007669"/>
    <property type="project" value="UniProtKB-KW"/>
</dbReference>
<dbReference type="CDD" id="cd08179">
    <property type="entry name" value="NADPH_BDH"/>
    <property type="match status" value="1"/>
</dbReference>
<dbReference type="FunFam" id="3.40.50.1970:FF:000003">
    <property type="entry name" value="Alcohol dehydrogenase, iron-containing"/>
    <property type="match status" value="1"/>
</dbReference>
<dbReference type="FunFam" id="1.20.1090.10:FF:000001">
    <property type="entry name" value="Aldehyde-alcohol dehydrogenase"/>
    <property type="match status" value="1"/>
</dbReference>
<dbReference type="Gene3D" id="3.40.50.1970">
    <property type="match status" value="1"/>
</dbReference>
<dbReference type="Gene3D" id="1.20.1090.10">
    <property type="entry name" value="Dehydroquinate synthase-like - alpha domain"/>
    <property type="match status" value="1"/>
</dbReference>
<dbReference type="InterPro" id="IPR001670">
    <property type="entry name" value="ADH_Fe/GldA"/>
</dbReference>
<dbReference type="InterPro" id="IPR056798">
    <property type="entry name" value="ADH_Fe_C"/>
</dbReference>
<dbReference type="InterPro" id="IPR039697">
    <property type="entry name" value="Alcohol_dehydrogenase_Fe"/>
</dbReference>
<dbReference type="InterPro" id="IPR034802">
    <property type="entry name" value="NADPH_BDH"/>
</dbReference>
<dbReference type="PANTHER" id="PTHR11496">
    <property type="entry name" value="ALCOHOL DEHYDROGENASE"/>
    <property type="match status" value="1"/>
</dbReference>
<dbReference type="PANTHER" id="PTHR11496:SF83">
    <property type="entry name" value="HYDROXYACID-OXOACID TRANSHYDROGENASE, MITOCHONDRIAL"/>
    <property type="match status" value="1"/>
</dbReference>
<dbReference type="Pfam" id="PF25137">
    <property type="entry name" value="ADH_Fe_C"/>
    <property type="match status" value="1"/>
</dbReference>
<dbReference type="Pfam" id="PF00465">
    <property type="entry name" value="Fe-ADH"/>
    <property type="match status" value="1"/>
</dbReference>
<dbReference type="SUPFAM" id="SSF56796">
    <property type="entry name" value="Dehydroquinate synthase-like"/>
    <property type="match status" value="1"/>
</dbReference>
<organism>
    <name type="scientific">Thermococcus barophilus</name>
    <dbReference type="NCBI Taxonomy" id="55802"/>
    <lineage>
        <taxon>Archaea</taxon>
        <taxon>Methanobacteriati</taxon>
        <taxon>Methanobacteriota</taxon>
        <taxon>Thermococci</taxon>
        <taxon>Thermococcales</taxon>
        <taxon>Thermococcaceae</taxon>
        <taxon>Thermococcus</taxon>
    </lineage>
</organism>
<feature type="chain" id="PRO_0000453259" description="Alcohol dehydrogenase">
    <location>
        <begin position="1"/>
        <end position="378"/>
    </location>
</feature>
<feature type="binding site" evidence="1">
    <location>
        <position position="195"/>
    </location>
    <ligand>
        <name>Fe cation</name>
        <dbReference type="ChEBI" id="CHEBI:24875"/>
    </ligand>
</feature>
<feature type="binding site" evidence="1">
    <location>
        <position position="199"/>
    </location>
    <ligand>
        <name>Fe cation</name>
        <dbReference type="ChEBI" id="CHEBI:24875"/>
    </ligand>
</feature>
<feature type="binding site" evidence="1">
    <location>
        <position position="262"/>
    </location>
    <ligand>
        <name>Fe cation</name>
        <dbReference type="ChEBI" id="CHEBI:24875"/>
    </ligand>
</feature>
<feature type="binding site" evidence="1">
    <location>
        <position position="274"/>
    </location>
    <ligand>
        <name>Fe cation</name>
        <dbReference type="ChEBI" id="CHEBI:24875"/>
    </ligand>
</feature>
<feature type="mutagenesis site" description="Disrupts the overall structure of the enzyme. Lack of acetaldehyde reduction activity and displays weak ethanol oxidation activity." evidence="2">
    <original>D</original>
    <variation>A</variation>
    <location>
        <position position="195"/>
    </location>
</feature>
<feature type="mutagenesis site" description="Disrupts the overall structure of the enzyme. Retains 10% of ethanol oxidation and acetaldehyde reduction activities." evidence="2">
    <original>H</original>
    <variation>A</variation>
    <location>
        <position position="199"/>
    </location>
</feature>
<feature type="mutagenesis site" description="Disrupts the overall structure of the enzyme. Displays weak ethanol oxidation and acetaldehyde reduction activities." evidence="2">
    <original>H</original>
    <variation>A</variation>
    <location>
        <position position="262"/>
    </location>
</feature>
<feature type="mutagenesis site" description="Disrupts the overall structure of the enzyme. Displays higher acetaldehyde reduction activity (134%) but lower ethanol oxidation activity (36%)." evidence="2">
    <original>H</original>
    <variation>A</variation>
    <location>
        <position position="266"/>
    </location>
</feature>
<feature type="mutagenesis site" description="Disrupts the overall structure of the enzyme. Retains 20% of ethanol oxidation and acetaldehyde reduction activities." evidence="2">
    <original>H</original>
    <variation>A</variation>
    <location>
        <position position="274"/>
    </location>
</feature>
<proteinExistence type="evidence at protein level"/>
<protein>
    <recommendedName>
        <fullName evidence="3">Alcohol dehydrogenase</fullName>
        <ecNumber evidence="2">1.1.1.1</ecNumber>
    </recommendedName>
</protein>
<accession>A0A0S1X9S7</accession>
<comment type="function">
    <text evidence="2">Thermostable type III alcohol dehydrogenase. For oxidation activity, the best substrates are 1-butanol and 1-hexanol, followed by ethanol. Shows lower activity with ethylene glycol, isopentanol, isopropanol and glycerol. Displays higher reduction activity in the presence of butanal, followed by acetaldehyde. Has lower activity with hexanal and acetone.</text>
</comment>
<comment type="catalytic activity">
    <reaction evidence="2">
        <text>a primary alcohol + NAD(+) = an aldehyde + NADH + H(+)</text>
        <dbReference type="Rhea" id="RHEA:10736"/>
        <dbReference type="ChEBI" id="CHEBI:15378"/>
        <dbReference type="ChEBI" id="CHEBI:15734"/>
        <dbReference type="ChEBI" id="CHEBI:17478"/>
        <dbReference type="ChEBI" id="CHEBI:57540"/>
        <dbReference type="ChEBI" id="CHEBI:57945"/>
        <dbReference type="EC" id="1.1.1.1"/>
    </reaction>
</comment>
<comment type="catalytic activity">
    <reaction evidence="2">
        <text>butan-1-ol + NAD(+) = butanal + NADH + H(+)</text>
        <dbReference type="Rhea" id="RHEA:33199"/>
        <dbReference type="ChEBI" id="CHEBI:15378"/>
        <dbReference type="ChEBI" id="CHEBI:15743"/>
        <dbReference type="ChEBI" id="CHEBI:28885"/>
        <dbReference type="ChEBI" id="CHEBI:57540"/>
        <dbReference type="ChEBI" id="CHEBI:57945"/>
    </reaction>
</comment>
<comment type="catalytic activity">
    <reaction evidence="2">
        <text>hexan-1-ol + NAD(+) = hexanal + NADH + H(+)</text>
        <dbReference type="Rhea" id="RHEA:60972"/>
        <dbReference type="ChEBI" id="CHEBI:15378"/>
        <dbReference type="ChEBI" id="CHEBI:57540"/>
        <dbReference type="ChEBI" id="CHEBI:57945"/>
        <dbReference type="ChEBI" id="CHEBI:87393"/>
        <dbReference type="ChEBI" id="CHEBI:88528"/>
    </reaction>
</comment>
<comment type="catalytic activity">
    <reaction evidence="2">
        <text>ethanol + NAD(+) = acetaldehyde + NADH + H(+)</text>
        <dbReference type="Rhea" id="RHEA:25290"/>
        <dbReference type="ChEBI" id="CHEBI:15343"/>
        <dbReference type="ChEBI" id="CHEBI:15378"/>
        <dbReference type="ChEBI" id="CHEBI:16236"/>
        <dbReference type="ChEBI" id="CHEBI:57540"/>
        <dbReference type="ChEBI" id="CHEBI:57945"/>
        <dbReference type="EC" id="1.1.1.1"/>
    </reaction>
</comment>
<comment type="cofactor">
    <cofactor evidence="2">
        <name>Fe(2+)</name>
        <dbReference type="ChEBI" id="CHEBI:29033"/>
    </cofactor>
    <cofactor evidence="2">
        <name>Mn(2+)</name>
        <dbReference type="ChEBI" id="CHEBI:29035"/>
    </cofactor>
    <text evidence="2">Dependent on a divalent cation for ethanol oxidation, among which Mn(2+) is optimal. Compared with the oxidation reaction, displays about 30% acetaldehyde reduction in the absence of divalent cation. Shows maximal reduction activity in the presence of Fe(2+).</text>
</comment>
<comment type="biophysicochemical properties">
    <kinetics>
        <KM evidence="2">92 mM for ethanol</KM>
        <KM evidence="2">34.5 mM for acetaldehyde</KM>
        <text evidence="2">kcat is 0.27 sec(-1) for ethanol oxidation. kcat is 69 sec(-1) for acetaldehyde reduction.</text>
    </kinetics>
    <phDependence>
        <text evidence="2">Optimum pH is 8.5 for oxidation and 7.0 for reduction.</text>
    </phDependence>
    <temperatureDependence>
        <text evidence="2">Optimum temperature is 75 degrees Celsius for both ethanol oxidation and acetaldehyde reduction.</text>
    </temperatureDependence>
</comment>
<comment type="similarity">
    <text evidence="4">Belongs to the iron-containing alcohol dehydrogenase family.</text>
</comment>